<name>MRAY_AROAE</name>
<evidence type="ECO:0000255" key="1">
    <source>
        <dbReference type="HAMAP-Rule" id="MF_00038"/>
    </source>
</evidence>
<dbReference type="EC" id="2.7.8.13" evidence="1"/>
<dbReference type="EMBL" id="CR555306">
    <property type="protein sequence ID" value="CAI06918.1"/>
    <property type="molecule type" value="Genomic_DNA"/>
</dbReference>
<dbReference type="RefSeq" id="WP_011236646.1">
    <property type="nucleotide sequence ID" value="NC_006513.1"/>
</dbReference>
<dbReference type="SMR" id="Q5P6Z3"/>
<dbReference type="STRING" id="76114.ebA1448"/>
<dbReference type="KEGG" id="eba:ebA1448"/>
<dbReference type="eggNOG" id="COG0472">
    <property type="taxonomic scope" value="Bacteria"/>
</dbReference>
<dbReference type="HOGENOM" id="CLU_023982_0_0_4"/>
<dbReference type="OrthoDB" id="9805475at2"/>
<dbReference type="UniPathway" id="UPA00219"/>
<dbReference type="Proteomes" id="UP000006552">
    <property type="component" value="Chromosome"/>
</dbReference>
<dbReference type="GO" id="GO:0005886">
    <property type="term" value="C:plasma membrane"/>
    <property type="evidence" value="ECO:0007669"/>
    <property type="project" value="UniProtKB-SubCell"/>
</dbReference>
<dbReference type="GO" id="GO:0046872">
    <property type="term" value="F:metal ion binding"/>
    <property type="evidence" value="ECO:0007669"/>
    <property type="project" value="UniProtKB-KW"/>
</dbReference>
<dbReference type="GO" id="GO:0008963">
    <property type="term" value="F:phospho-N-acetylmuramoyl-pentapeptide-transferase activity"/>
    <property type="evidence" value="ECO:0007669"/>
    <property type="project" value="UniProtKB-UniRule"/>
</dbReference>
<dbReference type="GO" id="GO:0051992">
    <property type="term" value="F:UDP-N-acetylmuramoyl-L-alanyl-D-glutamyl-meso-2,6-diaminopimelyl-D-alanyl-D-alanine:undecaprenyl-phosphate transferase activity"/>
    <property type="evidence" value="ECO:0007669"/>
    <property type="project" value="RHEA"/>
</dbReference>
<dbReference type="GO" id="GO:0051301">
    <property type="term" value="P:cell division"/>
    <property type="evidence" value="ECO:0007669"/>
    <property type="project" value="UniProtKB-KW"/>
</dbReference>
<dbReference type="GO" id="GO:0071555">
    <property type="term" value="P:cell wall organization"/>
    <property type="evidence" value="ECO:0007669"/>
    <property type="project" value="UniProtKB-KW"/>
</dbReference>
<dbReference type="GO" id="GO:0009252">
    <property type="term" value="P:peptidoglycan biosynthetic process"/>
    <property type="evidence" value="ECO:0007669"/>
    <property type="project" value="UniProtKB-UniRule"/>
</dbReference>
<dbReference type="GO" id="GO:0008360">
    <property type="term" value="P:regulation of cell shape"/>
    <property type="evidence" value="ECO:0007669"/>
    <property type="project" value="UniProtKB-KW"/>
</dbReference>
<dbReference type="CDD" id="cd06852">
    <property type="entry name" value="GT_MraY"/>
    <property type="match status" value="1"/>
</dbReference>
<dbReference type="HAMAP" id="MF_00038">
    <property type="entry name" value="MraY"/>
    <property type="match status" value="1"/>
</dbReference>
<dbReference type="InterPro" id="IPR000715">
    <property type="entry name" value="Glycosyl_transferase_4"/>
</dbReference>
<dbReference type="InterPro" id="IPR003524">
    <property type="entry name" value="PNAcMuramoyl-5peptid_Trfase"/>
</dbReference>
<dbReference type="InterPro" id="IPR018480">
    <property type="entry name" value="PNAcMuramoyl-5peptid_Trfase_CS"/>
</dbReference>
<dbReference type="NCBIfam" id="TIGR00445">
    <property type="entry name" value="mraY"/>
    <property type="match status" value="1"/>
</dbReference>
<dbReference type="PANTHER" id="PTHR22926">
    <property type="entry name" value="PHOSPHO-N-ACETYLMURAMOYL-PENTAPEPTIDE-TRANSFERASE"/>
    <property type="match status" value="1"/>
</dbReference>
<dbReference type="PANTHER" id="PTHR22926:SF5">
    <property type="entry name" value="PHOSPHO-N-ACETYLMURAMOYL-PENTAPEPTIDE-TRANSFERASE HOMOLOG"/>
    <property type="match status" value="1"/>
</dbReference>
<dbReference type="Pfam" id="PF00953">
    <property type="entry name" value="Glycos_transf_4"/>
    <property type="match status" value="1"/>
</dbReference>
<dbReference type="Pfam" id="PF10555">
    <property type="entry name" value="MraY_sig1"/>
    <property type="match status" value="1"/>
</dbReference>
<dbReference type="PROSITE" id="PS01347">
    <property type="entry name" value="MRAY_1"/>
    <property type="match status" value="1"/>
</dbReference>
<dbReference type="PROSITE" id="PS01348">
    <property type="entry name" value="MRAY_2"/>
    <property type="match status" value="1"/>
</dbReference>
<reference key="1">
    <citation type="journal article" date="2005" name="Arch. Microbiol.">
        <title>The genome sequence of an anaerobic aromatic-degrading denitrifying bacterium, strain EbN1.</title>
        <authorList>
            <person name="Rabus R."/>
            <person name="Kube M."/>
            <person name="Heider J."/>
            <person name="Beck A."/>
            <person name="Heitmann K."/>
            <person name="Widdel F."/>
            <person name="Reinhardt R."/>
        </authorList>
    </citation>
    <scope>NUCLEOTIDE SEQUENCE [LARGE SCALE GENOMIC DNA]</scope>
    <source>
        <strain>DSM 19018 / LMG 30748 / EbN1</strain>
    </source>
</reference>
<comment type="function">
    <text evidence="1">Catalyzes the initial step of the lipid cycle reactions in the biosynthesis of the cell wall peptidoglycan: transfers peptidoglycan precursor phospho-MurNAc-pentapeptide from UDP-MurNAc-pentapeptide onto the lipid carrier undecaprenyl phosphate, yielding undecaprenyl-pyrophosphoryl-MurNAc-pentapeptide, known as lipid I.</text>
</comment>
<comment type="catalytic activity">
    <reaction evidence="1">
        <text>UDP-N-acetyl-alpha-D-muramoyl-L-alanyl-gamma-D-glutamyl-meso-2,6-diaminopimeloyl-D-alanyl-D-alanine + di-trans,octa-cis-undecaprenyl phosphate = di-trans,octa-cis-undecaprenyl diphospho-N-acetyl-alpha-D-muramoyl-L-alanyl-D-glutamyl-meso-2,6-diaminopimeloyl-D-alanyl-D-alanine + UMP</text>
        <dbReference type="Rhea" id="RHEA:28386"/>
        <dbReference type="ChEBI" id="CHEBI:57865"/>
        <dbReference type="ChEBI" id="CHEBI:60392"/>
        <dbReference type="ChEBI" id="CHEBI:61386"/>
        <dbReference type="ChEBI" id="CHEBI:61387"/>
        <dbReference type="EC" id="2.7.8.13"/>
    </reaction>
</comment>
<comment type="cofactor">
    <cofactor evidence="1">
        <name>Mg(2+)</name>
        <dbReference type="ChEBI" id="CHEBI:18420"/>
    </cofactor>
</comment>
<comment type="pathway">
    <text evidence="1">Cell wall biogenesis; peptidoglycan biosynthesis.</text>
</comment>
<comment type="subcellular location">
    <subcellularLocation>
        <location evidence="1">Cell inner membrane</location>
        <topology evidence="1">Multi-pass membrane protein</topology>
    </subcellularLocation>
</comment>
<comment type="similarity">
    <text evidence="1">Belongs to the glycosyltransferase 4 family. MraY subfamily.</text>
</comment>
<accession>Q5P6Z3</accession>
<feature type="chain" id="PRO_0000108773" description="Phospho-N-acetylmuramoyl-pentapeptide-transferase">
    <location>
        <begin position="1"/>
        <end position="362"/>
    </location>
</feature>
<feature type="transmembrane region" description="Helical" evidence="1">
    <location>
        <begin position="27"/>
        <end position="47"/>
    </location>
</feature>
<feature type="transmembrane region" description="Helical" evidence="1">
    <location>
        <begin position="73"/>
        <end position="93"/>
    </location>
</feature>
<feature type="transmembrane region" description="Helical" evidence="1">
    <location>
        <begin position="97"/>
        <end position="117"/>
    </location>
</feature>
<feature type="transmembrane region" description="Helical" evidence="1">
    <location>
        <begin position="132"/>
        <end position="152"/>
    </location>
</feature>
<feature type="transmembrane region" description="Helical" evidence="1">
    <location>
        <begin position="160"/>
        <end position="180"/>
    </location>
</feature>
<feature type="transmembrane region" description="Helical" evidence="1">
    <location>
        <begin position="200"/>
        <end position="220"/>
    </location>
</feature>
<feature type="transmembrane region" description="Helical" evidence="1">
    <location>
        <begin position="237"/>
        <end position="257"/>
    </location>
</feature>
<feature type="transmembrane region" description="Helical" evidence="1">
    <location>
        <begin position="264"/>
        <end position="284"/>
    </location>
</feature>
<feature type="transmembrane region" description="Helical" evidence="1">
    <location>
        <begin position="289"/>
        <end position="309"/>
    </location>
</feature>
<feature type="transmembrane region" description="Helical" evidence="1">
    <location>
        <begin position="339"/>
        <end position="359"/>
    </location>
</feature>
<proteinExistence type="inferred from homology"/>
<gene>
    <name evidence="1" type="primary">mraY</name>
    <name type="ordered locus">AZOSEA07950</name>
    <name type="ORF">ebA1448</name>
</gene>
<keyword id="KW-0131">Cell cycle</keyword>
<keyword id="KW-0132">Cell division</keyword>
<keyword id="KW-0997">Cell inner membrane</keyword>
<keyword id="KW-1003">Cell membrane</keyword>
<keyword id="KW-0133">Cell shape</keyword>
<keyword id="KW-0961">Cell wall biogenesis/degradation</keyword>
<keyword id="KW-0460">Magnesium</keyword>
<keyword id="KW-0472">Membrane</keyword>
<keyword id="KW-0479">Metal-binding</keyword>
<keyword id="KW-0573">Peptidoglycan synthesis</keyword>
<keyword id="KW-1185">Reference proteome</keyword>
<keyword id="KW-0808">Transferase</keyword>
<keyword id="KW-0812">Transmembrane</keyword>
<keyword id="KW-1133">Transmembrane helix</keyword>
<organism>
    <name type="scientific">Aromatoleum aromaticum (strain DSM 19018 / LMG 30748 / EbN1)</name>
    <name type="common">Azoarcus sp. (strain EbN1)</name>
    <dbReference type="NCBI Taxonomy" id="76114"/>
    <lineage>
        <taxon>Bacteria</taxon>
        <taxon>Pseudomonadati</taxon>
        <taxon>Pseudomonadota</taxon>
        <taxon>Betaproteobacteria</taxon>
        <taxon>Rhodocyclales</taxon>
        <taxon>Rhodocyclaceae</taxon>
        <taxon>Aromatoleum</taxon>
    </lineage>
</organism>
<protein>
    <recommendedName>
        <fullName evidence="1">Phospho-N-acetylmuramoyl-pentapeptide-transferase</fullName>
        <ecNumber evidence="1">2.7.8.13</ecNumber>
    </recommendedName>
    <alternativeName>
        <fullName evidence="1">UDP-MurNAc-pentapeptide phosphotransferase</fullName>
    </alternativeName>
</protein>
<sequence length="362" mass="38992">MLLEFALWLGQDIRAFNVFGYITLRTVMAAMTALLISFACGPAVIRWLAAKKIGQAVRDDGPKSHLTKAGTPTMGGALIIIAIAVTTLLWGDLRNQYVWVTLLVTLGFGAVGWVDDWRKVVHRDPKGLASRWKYLWTSLIALAAALFLGLTANEPAQTELIVPFFKAVSYPLGMLGFVALSYFVINGTSHSVNLTDGLDGLAIMPTVMVAGALAIFAYVAGHAGFSKYLGVPYIAGAGELAVFCGALAGAGLGFLWFNAYPAEVFMGDVGALALGAALGTVAVVVRQEIVLFIMGGLFVAETLSVMVQVLYFKASGGKRIFRMAPLHHHYELGGWKETQVVVRFWIITIMLVLFGLSTLKLR</sequence>